<dbReference type="EC" id="2.7.11.32" evidence="1"/>
<dbReference type="EC" id="2.7.4.27" evidence="1"/>
<dbReference type="EMBL" id="CP000033">
    <property type="protein sequence ID" value="AAV43042.1"/>
    <property type="molecule type" value="Genomic_DNA"/>
</dbReference>
<dbReference type="RefSeq" id="WP_003547712.1">
    <property type="nucleotide sequence ID" value="NC_006814.3"/>
</dbReference>
<dbReference type="RefSeq" id="YP_194073.1">
    <property type="nucleotide sequence ID" value="NC_006814.3"/>
</dbReference>
<dbReference type="SMR" id="Q5FJT2"/>
<dbReference type="STRING" id="272621.LBA1206"/>
<dbReference type="KEGG" id="lac:LBA1206"/>
<dbReference type="PATRIC" id="fig|272621.13.peg.1144"/>
<dbReference type="eggNOG" id="COG1806">
    <property type="taxonomic scope" value="Bacteria"/>
</dbReference>
<dbReference type="HOGENOM" id="CLU_046206_2_1_9"/>
<dbReference type="OrthoDB" id="9782201at2"/>
<dbReference type="BioCyc" id="LACI272621:G1G49-1193-MONOMER"/>
<dbReference type="Proteomes" id="UP000006381">
    <property type="component" value="Chromosome"/>
</dbReference>
<dbReference type="GO" id="GO:0043531">
    <property type="term" value="F:ADP binding"/>
    <property type="evidence" value="ECO:0007669"/>
    <property type="project" value="UniProtKB-UniRule"/>
</dbReference>
<dbReference type="GO" id="GO:0005524">
    <property type="term" value="F:ATP binding"/>
    <property type="evidence" value="ECO:0007669"/>
    <property type="project" value="InterPro"/>
</dbReference>
<dbReference type="GO" id="GO:0016776">
    <property type="term" value="F:phosphotransferase activity, phosphate group as acceptor"/>
    <property type="evidence" value="ECO:0007669"/>
    <property type="project" value="UniProtKB-UniRule"/>
</dbReference>
<dbReference type="GO" id="GO:0004674">
    <property type="term" value="F:protein serine/threonine kinase activity"/>
    <property type="evidence" value="ECO:0007669"/>
    <property type="project" value="UniProtKB-UniRule"/>
</dbReference>
<dbReference type="HAMAP" id="MF_00921">
    <property type="entry name" value="PDRP"/>
    <property type="match status" value="1"/>
</dbReference>
<dbReference type="InterPro" id="IPR005177">
    <property type="entry name" value="Kinase-pyrophosphorylase"/>
</dbReference>
<dbReference type="InterPro" id="IPR027417">
    <property type="entry name" value="P-loop_NTPase"/>
</dbReference>
<dbReference type="InterPro" id="IPR026565">
    <property type="entry name" value="PPDK_reg"/>
</dbReference>
<dbReference type="NCBIfam" id="NF003742">
    <property type="entry name" value="PRK05339.1"/>
    <property type="match status" value="1"/>
</dbReference>
<dbReference type="PANTHER" id="PTHR31756">
    <property type="entry name" value="PYRUVATE, PHOSPHATE DIKINASE REGULATORY PROTEIN 1, CHLOROPLASTIC"/>
    <property type="match status" value="1"/>
</dbReference>
<dbReference type="PANTHER" id="PTHR31756:SF3">
    <property type="entry name" value="PYRUVATE, PHOSPHATE DIKINASE REGULATORY PROTEIN 1, CHLOROPLASTIC"/>
    <property type="match status" value="1"/>
</dbReference>
<dbReference type="Pfam" id="PF03618">
    <property type="entry name" value="Kinase-PPPase"/>
    <property type="match status" value="1"/>
</dbReference>
<dbReference type="SUPFAM" id="SSF52540">
    <property type="entry name" value="P-loop containing nucleoside triphosphate hydrolases"/>
    <property type="match status" value="1"/>
</dbReference>
<keyword id="KW-0418">Kinase</keyword>
<keyword id="KW-0547">Nucleotide-binding</keyword>
<keyword id="KW-1185">Reference proteome</keyword>
<keyword id="KW-0723">Serine/threonine-protein kinase</keyword>
<keyword id="KW-0808">Transferase</keyword>
<sequence length="278" mass="31258">MAETKDQNVLNIIIISDAAGDTAFSNATAAAAEFPNAEINYRRYPFITNLEKLDEVLKEIEKYPNLVIIFSLVKDEMQIPVIKFARDHNIQCVDIFSPVVEAIQQTTHMIPDQKIGAQHSLNQKYFDRISAMEFAVMYDDGKDPKGFLEADVVLLGVSRTSKTPLSLFLANKNLKVANLPLVPETHIPKEIYEIDPKKIIGLTNDPSVLNEIRRQRMIAYGLNPDTTYSSMDSINKELESAQALYKKLGCYVINVAHRSIEETAALILEHLGIDDYAK</sequence>
<feature type="chain" id="PRO_0000196665" description="Putative pyruvate, phosphate dikinase regulatory protein">
    <location>
        <begin position="1"/>
        <end position="278"/>
    </location>
</feature>
<feature type="binding site" evidence="1">
    <location>
        <begin position="156"/>
        <end position="163"/>
    </location>
    <ligand>
        <name>ADP</name>
        <dbReference type="ChEBI" id="CHEBI:456216"/>
    </ligand>
</feature>
<accession>Q5FJT2</accession>
<proteinExistence type="inferred from homology"/>
<reference key="1">
    <citation type="journal article" date="2005" name="Proc. Natl. Acad. Sci. U.S.A.">
        <title>Complete genome sequence of the probiotic lactic acid bacterium Lactobacillus acidophilus NCFM.</title>
        <authorList>
            <person name="Altermann E."/>
            <person name="Russell W.M."/>
            <person name="Azcarate-Peril M.A."/>
            <person name="Barrangou R."/>
            <person name="Buck B.L."/>
            <person name="McAuliffe O."/>
            <person name="Souther N."/>
            <person name="Dobson A."/>
            <person name="Duong T."/>
            <person name="Callanan M."/>
            <person name="Lick S."/>
            <person name="Hamrick A."/>
            <person name="Cano R."/>
            <person name="Klaenhammer T.R."/>
        </authorList>
    </citation>
    <scope>NUCLEOTIDE SEQUENCE [LARGE SCALE GENOMIC DNA]</scope>
    <source>
        <strain>ATCC 700396 / NCK56 / N2 / NCFM</strain>
    </source>
</reference>
<gene>
    <name type="ordered locus">LBA1206</name>
</gene>
<name>PDRP_LACAC</name>
<evidence type="ECO:0000255" key="1">
    <source>
        <dbReference type="HAMAP-Rule" id="MF_00921"/>
    </source>
</evidence>
<protein>
    <recommendedName>
        <fullName evidence="1">Putative pyruvate, phosphate dikinase regulatory protein</fullName>
        <shortName evidence="1">PPDK regulatory protein</shortName>
        <ecNumber evidence="1">2.7.11.32</ecNumber>
        <ecNumber evidence="1">2.7.4.27</ecNumber>
    </recommendedName>
</protein>
<organism>
    <name type="scientific">Lactobacillus acidophilus (strain ATCC 700396 / NCK56 / N2 / NCFM)</name>
    <dbReference type="NCBI Taxonomy" id="272621"/>
    <lineage>
        <taxon>Bacteria</taxon>
        <taxon>Bacillati</taxon>
        <taxon>Bacillota</taxon>
        <taxon>Bacilli</taxon>
        <taxon>Lactobacillales</taxon>
        <taxon>Lactobacillaceae</taxon>
        <taxon>Lactobacillus</taxon>
    </lineage>
</organism>
<comment type="function">
    <text evidence="1">Bifunctional serine/threonine kinase and phosphorylase involved in the regulation of the pyruvate, phosphate dikinase (PPDK) by catalyzing its phosphorylation/dephosphorylation.</text>
</comment>
<comment type="catalytic activity">
    <reaction evidence="1">
        <text>N(tele)-phospho-L-histidyl/L-threonyl-[pyruvate, phosphate dikinase] + ADP = N(tele)-phospho-L-histidyl/O-phospho-L-threonyl-[pyruvate, phosphate dikinase] + AMP + H(+)</text>
        <dbReference type="Rhea" id="RHEA:43692"/>
        <dbReference type="Rhea" id="RHEA-COMP:10650"/>
        <dbReference type="Rhea" id="RHEA-COMP:10651"/>
        <dbReference type="ChEBI" id="CHEBI:15378"/>
        <dbReference type="ChEBI" id="CHEBI:30013"/>
        <dbReference type="ChEBI" id="CHEBI:61977"/>
        <dbReference type="ChEBI" id="CHEBI:83586"/>
        <dbReference type="ChEBI" id="CHEBI:456215"/>
        <dbReference type="ChEBI" id="CHEBI:456216"/>
        <dbReference type="EC" id="2.7.11.32"/>
    </reaction>
</comment>
<comment type="catalytic activity">
    <reaction evidence="1">
        <text>N(tele)-phospho-L-histidyl/O-phospho-L-threonyl-[pyruvate, phosphate dikinase] + phosphate + H(+) = N(tele)-phospho-L-histidyl/L-threonyl-[pyruvate, phosphate dikinase] + diphosphate</text>
        <dbReference type="Rhea" id="RHEA:43696"/>
        <dbReference type="Rhea" id="RHEA-COMP:10650"/>
        <dbReference type="Rhea" id="RHEA-COMP:10651"/>
        <dbReference type="ChEBI" id="CHEBI:15378"/>
        <dbReference type="ChEBI" id="CHEBI:30013"/>
        <dbReference type="ChEBI" id="CHEBI:33019"/>
        <dbReference type="ChEBI" id="CHEBI:43474"/>
        <dbReference type="ChEBI" id="CHEBI:61977"/>
        <dbReference type="ChEBI" id="CHEBI:83586"/>
        <dbReference type="EC" id="2.7.4.27"/>
    </reaction>
</comment>
<comment type="similarity">
    <text evidence="1">Belongs to the pyruvate, phosphate/water dikinase regulatory protein family. PDRP subfamily.</text>
</comment>